<accession>B4U228</accession>
<organism>
    <name type="scientific">Streptococcus equi subsp. zooepidemicus (strain MGCS10565)</name>
    <dbReference type="NCBI Taxonomy" id="552526"/>
    <lineage>
        <taxon>Bacteria</taxon>
        <taxon>Bacillati</taxon>
        <taxon>Bacillota</taxon>
        <taxon>Bacilli</taxon>
        <taxon>Lactobacillales</taxon>
        <taxon>Streptococcaceae</taxon>
        <taxon>Streptococcus</taxon>
    </lineage>
</organism>
<proteinExistence type="inferred from homology"/>
<keyword id="KW-0067">ATP-binding</keyword>
<keyword id="KW-0963">Cytoplasm</keyword>
<keyword id="KW-0460">Magnesium</keyword>
<keyword id="KW-0479">Metal-binding</keyword>
<keyword id="KW-0547">Nucleotide-binding</keyword>
<keyword id="KW-0554">One-carbon metabolism</keyword>
<keyword id="KW-0630">Potassium</keyword>
<keyword id="KW-0808">Transferase</keyword>
<gene>
    <name evidence="1" type="primary">metK</name>
    <name type="ordered locus">Sez_0680</name>
</gene>
<evidence type="ECO:0000255" key="1">
    <source>
        <dbReference type="HAMAP-Rule" id="MF_00086"/>
    </source>
</evidence>
<comment type="function">
    <text evidence="1">Catalyzes the formation of S-adenosylmethionine (AdoMet) from methionine and ATP. The overall synthetic reaction is composed of two sequential steps, AdoMet formation and the subsequent tripolyphosphate hydrolysis which occurs prior to release of AdoMet from the enzyme.</text>
</comment>
<comment type="catalytic activity">
    <reaction evidence="1">
        <text>L-methionine + ATP + H2O = S-adenosyl-L-methionine + phosphate + diphosphate</text>
        <dbReference type="Rhea" id="RHEA:21080"/>
        <dbReference type="ChEBI" id="CHEBI:15377"/>
        <dbReference type="ChEBI" id="CHEBI:30616"/>
        <dbReference type="ChEBI" id="CHEBI:33019"/>
        <dbReference type="ChEBI" id="CHEBI:43474"/>
        <dbReference type="ChEBI" id="CHEBI:57844"/>
        <dbReference type="ChEBI" id="CHEBI:59789"/>
        <dbReference type="EC" id="2.5.1.6"/>
    </reaction>
</comment>
<comment type="cofactor">
    <cofactor evidence="1">
        <name>Mg(2+)</name>
        <dbReference type="ChEBI" id="CHEBI:18420"/>
    </cofactor>
    <text evidence="1">Binds 2 divalent ions per subunit.</text>
</comment>
<comment type="cofactor">
    <cofactor evidence="1">
        <name>K(+)</name>
        <dbReference type="ChEBI" id="CHEBI:29103"/>
    </cofactor>
    <text evidence="1">Binds 1 potassium ion per subunit.</text>
</comment>
<comment type="pathway">
    <text evidence="1">Amino-acid biosynthesis; S-adenosyl-L-methionine biosynthesis; S-adenosyl-L-methionine from L-methionine: step 1/1.</text>
</comment>
<comment type="subunit">
    <text evidence="1">Homotetramer; dimer of dimers.</text>
</comment>
<comment type="subcellular location">
    <subcellularLocation>
        <location evidence="1">Cytoplasm</location>
    </subcellularLocation>
</comment>
<comment type="similarity">
    <text evidence="1">Belongs to the AdoMet synthase family.</text>
</comment>
<dbReference type="EC" id="2.5.1.6" evidence="1"/>
<dbReference type="EMBL" id="CP001129">
    <property type="protein sequence ID" value="ACG62045.1"/>
    <property type="molecule type" value="Genomic_DNA"/>
</dbReference>
<dbReference type="RefSeq" id="WP_012515321.1">
    <property type="nucleotide sequence ID" value="NC_011134.1"/>
</dbReference>
<dbReference type="SMR" id="B4U228"/>
<dbReference type="GeneID" id="83704525"/>
<dbReference type="KEGG" id="sez:Sez_0680"/>
<dbReference type="HOGENOM" id="CLU_041802_1_1_9"/>
<dbReference type="UniPathway" id="UPA00315">
    <property type="reaction ID" value="UER00080"/>
</dbReference>
<dbReference type="Proteomes" id="UP000001873">
    <property type="component" value="Chromosome"/>
</dbReference>
<dbReference type="GO" id="GO:0005737">
    <property type="term" value="C:cytoplasm"/>
    <property type="evidence" value="ECO:0007669"/>
    <property type="project" value="UniProtKB-SubCell"/>
</dbReference>
<dbReference type="GO" id="GO:0005524">
    <property type="term" value="F:ATP binding"/>
    <property type="evidence" value="ECO:0007669"/>
    <property type="project" value="UniProtKB-UniRule"/>
</dbReference>
<dbReference type="GO" id="GO:0000287">
    <property type="term" value="F:magnesium ion binding"/>
    <property type="evidence" value="ECO:0007669"/>
    <property type="project" value="UniProtKB-UniRule"/>
</dbReference>
<dbReference type="GO" id="GO:0004478">
    <property type="term" value="F:methionine adenosyltransferase activity"/>
    <property type="evidence" value="ECO:0007669"/>
    <property type="project" value="UniProtKB-UniRule"/>
</dbReference>
<dbReference type="GO" id="GO:0006730">
    <property type="term" value="P:one-carbon metabolic process"/>
    <property type="evidence" value="ECO:0007669"/>
    <property type="project" value="UniProtKB-KW"/>
</dbReference>
<dbReference type="GO" id="GO:0006556">
    <property type="term" value="P:S-adenosylmethionine biosynthetic process"/>
    <property type="evidence" value="ECO:0007669"/>
    <property type="project" value="UniProtKB-UniRule"/>
</dbReference>
<dbReference type="CDD" id="cd18079">
    <property type="entry name" value="S-AdoMet_synt"/>
    <property type="match status" value="1"/>
</dbReference>
<dbReference type="FunFam" id="3.30.300.10:FF:000003">
    <property type="entry name" value="S-adenosylmethionine synthase"/>
    <property type="match status" value="1"/>
</dbReference>
<dbReference type="Gene3D" id="3.30.300.10">
    <property type="match status" value="3"/>
</dbReference>
<dbReference type="HAMAP" id="MF_00086">
    <property type="entry name" value="S_AdoMet_synth1"/>
    <property type="match status" value="1"/>
</dbReference>
<dbReference type="InterPro" id="IPR022631">
    <property type="entry name" value="ADOMET_SYNTHASE_CS"/>
</dbReference>
<dbReference type="InterPro" id="IPR022630">
    <property type="entry name" value="S-AdoMet_synt_C"/>
</dbReference>
<dbReference type="InterPro" id="IPR022629">
    <property type="entry name" value="S-AdoMet_synt_central"/>
</dbReference>
<dbReference type="InterPro" id="IPR022628">
    <property type="entry name" value="S-AdoMet_synt_N"/>
</dbReference>
<dbReference type="InterPro" id="IPR002133">
    <property type="entry name" value="S-AdoMet_synthetase"/>
</dbReference>
<dbReference type="InterPro" id="IPR022636">
    <property type="entry name" value="S-AdoMet_synthetase_sfam"/>
</dbReference>
<dbReference type="NCBIfam" id="TIGR01034">
    <property type="entry name" value="metK"/>
    <property type="match status" value="1"/>
</dbReference>
<dbReference type="PANTHER" id="PTHR11964">
    <property type="entry name" value="S-ADENOSYLMETHIONINE SYNTHETASE"/>
    <property type="match status" value="1"/>
</dbReference>
<dbReference type="Pfam" id="PF02773">
    <property type="entry name" value="S-AdoMet_synt_C"/>
    <property type="match status" value="1"/>
</dbReference>
<dbReference type="Pfam" id="PF02772">
    <property type="entry name" value="S-AdoMet_synt_M"/>
    <property type="match status" value="1"/>
</dbReference>
<dbReference type="Pfam" id="PF00438">
    <property type="entry name" value="S-AdoMet_synt_N"/>
    <property type="match status" value="1"/>
</dbReference>
<dbReference type="PIRSF" id="PIRSF000497">
    <property type="entry name" value="MAT"/>
    <property type="match status" value="1"/>
</dbReference>
<dbReference type="SUPFAM" id="SSF55973">
    <property type="entry name" value="S-adenosylmethionine synthetase"/>
    <property type="match status" value="3"/>
</dbReference>
<dbReference type="PROSITE" id="PS00376">
    <property type="entry name" value="ADOMET_SYNTHASE_1"/>
    <property type="match status" value="1"/>
</dbReference>
<dbReference type="PROSITE" id="PS00377">
    <property type="entry name" value="ADOMET_SYNTHASE_2"/>
    <property type="match status" value="1"/>
</dbReference>
<protein>
    <recommendedName>
        <fullName evidence="1">S-adenosylmethionine synthase</fullName>
        <shortName evidence="1">AdoMet synthase</shortName>
        <ecNumber evidence="1">2.5.1.6</ecNumber>
    </recommendedName>
    <alternativeName>
        <fullName evidence="1">MAT</fullName>
    </alternativeName>
    <alternativeName>
        <fullName evidence="1">Methionine adenosyltransferase</fullName>
    </alternativeName>
</protein>
<feature type="chain" id="PRO_1000093087" description="S-adenosylmethionine synthase">
    <location>
        <begin position="1"/>
        <end position="401"/>
    </location>
</feature>
<feature type="region of interest" description="Flexible loop" evidence="1">
    <location>
        <begin position="100"/>
        <end position="110"/>
    </location>
</feature>
<feature type="binding site" description="in other chain" evidence="1">
    <location>
        <position position="16"/>
    </location>
    <ligand>
        <name>ATP</name>
        <dbReference type="ChEBI" id="CHEBI:30616"/>
        <note>ligand shared between two neighboring subunits</note>
    </ligand>
</feature>
<feature type="binding site" evidence="1">
    <location>
        <position position="18"/>
    </location>
    <ligand>
        <name>Mg(2+)</name>
        <dbReference type="ChEBI" id="CHEBI:18420"/>
    </ligand>
</feature>
<feature type="binding site" evidence="1">
    <location>
        <position position="44"/>
    </location>
    <ligand>
        <name>K(+)</name>
        <dbReference type="ChEBI" id="CHEBI:29103"/>
    </ligand>
</feature>
<feature type="binding site" description="in other chain" evidence="1">
    <location>
        <position position="57"/>
    </location>
    <ligand>
        <name>L-methionine</name>
        <dbReference type="ChEBI" id="CHEBI:57844"/>
        <note>ligand shared between two neighboring subunits</note>
    </ligand>
</feature>
<feature type="binding site" description="in other chain" evidence="1">
    <location>
        <position position="100"/>
    </location>
    <ligand>
        <name>L-methionine</name>
        <dbReference type="ChEBI" id="CHEBI:57844"/>
        <note>ligand shared between two neighboring subunits</note>
    </ligand>
</feature>
<feature type="binding site" description="in other chain" evidence="1">
    <location>
        <begin position="174"/>
        <end position="176"/>
    </location>
    <ligand>
        <name>ATP</name>
        <dbReference type="ChEBI" id="CHEBI:30616"/>
        <note>ligand shared between two neighboring subunits</note>
    </ligand>
</feature>
<feature type="binding site" description="in other chain" evidence="1">
    <location>
        <begin position="241"/>
        <end position="242"/>
    </location>
    <ligand>
        <name>ATP</name>
        <dbReference type="ChEBI" id="CHEBI:30616"/>
        <note>ligand shared between two neighboring subunits</note>
    </ligand>
</feature>
<feature type="binding site" evidence="1">
    <location>
        <position position="250"/>
    </location>
    <ligand>
        <name>ATP</name>
        <dbReference type="ChEBI" id="CHEBI:30616"/>
        <note>ligand shared between two neighboring subunits</note>
    </ligand>
</feature>
<feature type="binding site" evidence="1">
    <location>
        <position position="250"/>
    </location>
    <ligand>
        <name>L-methionine</name>
        <dbReference type="ChEBI" id="CHEBI:57844"/>
        <note>ligand shared between two neighboring subunits</note>
    </ligand>
</feature>
<feature type="binding site" description="in other chain" evidence="1">
    <location>
        <begin position="256"/>
        <end position="257"/>
    </location>
    <ligand>
        <name>ATP</name>
        <dbReference type="ChEBI" id="CHEBI:30616"/>
        <note>ligand shared between two neighboring subunits</note>
    </ligand>
</feature>
<feature type="binding site" evidence="1">
    <location>
        <position position="273"/>
    </location>
    <ligand>
        <name>ATP</name>
        <dbReference type="ChEBI" id="CHEBI:30616"/>
        <note>ligand shared between two neighboring subunits</note>
    </ligand>
</feature>
<feature type="binding site" evidence="1">
    <location>
        <position position="277"/>
    </location>
    <ligand>
        <name>ATP</name>
        <dbReference type="ChEBI" id="CHEBI:30616"/>
        <note>ligand shared between two neighboring subunits</note>
    </ligand>
</feature>
<feature type="binding site" description="in other chain" evidence="1">
    <location>
        <position position="281"/>
    </location>
    <ligand>
        <name>L-methionine</name>
        <dbReference type="ChEBI" id="CHEBI:57844"/>
        <note>ligand shared between two neighboring subunits</note>
    </ligand>
</feature>
<sequence>MSERKLFTSESVSEGHPDKIADQISDAILDAILAKDPEAHVAAETCVYTGSVHVFGEISTTAYVDINRVVRDTIAEIGYTEAEYGFSAESVGVHPSLVEQSPDIAQGVNEALEAREGQSDDFNVIGAGDQGLMFGFAIDETPELMPLPISLSHQLVRRLATLRKSGEISYLRPDAKSQVTVEYDEHDKPVRVDTVVISTQHDPEVSNDQIRQDMIEQVIKAVIPAHYLDEKTRFLINPTGRFVIGGPQGDSGLTGRKIIVDTYGGYARHGGGAFSGKDATKVDRSASYAARYIAKNLVAAGLASKAEVQLAYAIGVAQPVSVRVDTFGTSTVSESILEAAVRQVFDLRPAGIIKMLDLKRPIYKQTAAYGHMGRTDIDLPWEHLDKVSPLTEAVAALSEGA</sequence>
<name>METK_STREM</name>
<reference key="1">
    <citation type="journal article" date="2008" name="PLoS ONE">
        <title>Genome sequence of a lancefield group C Streptococcus zooepidemicus strain causing epidemic nephritis: new information about an old disease.</title>
        <authorList>
            <person name="Beres S.B."/>
            <person name="Sesso R."/>
            <person name="Pinto S.W.L."/>
            <person name="Hoe N.P."/>
            <person name="Porcella S.F."/>
            <person name="Deleo F.R."/>
            <person name="Musser J.M."/>
        </authorList>
    </citation>
    <scope>NUCLEOTIDE SEQUENCE [LARGE SCALE GENOMIC DNA]</scope>
    <source>
        <strain>MGCS10565</strain>
    </source>
</reference>